<gene>
    <name evidence="1" type="primary">psbJ</name>
</gene>
<dbReference type="EMBL" id="DQ923117">
    <property type="protein sequence ID" value="ABI49877.1"/>
    <property type="molecule type" value="Genomic_DNA"/>
</dbReference>
<dbReference type="RefSeq" id="YP_740664.1">
    <property type="nucleotide sequence ID" value="NC_008336.1"/>
</dbReference>
<dbReference type="SMR" id="Q09FU7"/>
<dbReference type="GeneID" id="4271610"/>
<dbReference type="GO" id="GO:0009535">
    <property type="term" value="C:chloroplast thylakoid membrane"/>
    <property type="evidence" value="ECO:0007669"/>
    <property type="project" value="UniProtKB-SubCell"/>
</dbReference>
<dbReference type="GO" id="GO:0009539">
    <property type="term" value="C:photosystem II reaction center"/>
    <property type="evidence" value="ECO:0007669"/>
    <property type="project" value="InterPro"/>
</dbReference>
<dbReference type="GO" id="GO:0015979">
    <property type="term" value="P:photosynthesis"/>
    <property type="evidence" value="ECO:0007669"/>
    <property type="project" value="UniProtKB-UniRule"/>
</dbReference>
<dbReference type="Gene3D" id="6.10.250.2070">
    <property type="match status" value="1"/>
</dbReference>
<dbReference type="HAMAP" id="MF_01305">
    <property type="entry name" value="PSII_PsbJ"/>
    <property type="match status" value="1"/>
</dbReference>
<dbReference type="InterPro" id="IPR002682">
    <property type="entry name" value="PSII_PsbJ"/>
</dbReference>
<dbReference type="InterPro" id="IPR037267">
    <property type="entry name" value="PSII_PsbJ_sf"/>
</dbReference>
<dbReference type="NCBIfam" id="NF002722">
    <property type="entry name" value="PRK02565.1"/>
    <property type="match status" value="1"/>
</dbReference>
<dbReference type="PANTHER" id="PTHR34812">
    <property type="entry name" value="PHOTOSYSTEM II REACTION CENTER PROTEIN J"/>
    <property type="match status" value="1"/>
</dbReference>
<dbReference type="PANTHER" id="PTHR34812:SF3">
    <property type="entry name" value="PHOTOSYSTEM II REACTION CENTER PROTEIN J"/>
    <property type="match status" value="1"/>
</dbReference>
<dbReference type="Pfam" id="PF01788">
    <property type="entry name" value="PsbJ"/>
    <property type="match status" value="1"/>
</dbReference>
<dbReference type="SUPFAM" id="SSF161021">
    <property type="entry name" value="Photosystem II reaction center protein J, PsbJ"/>
    <property type="match status" value="1"/>
</dbReference>
<protein>
    <recommendedName>
        <fullName evidence="1">Photosystem II reaction center protein J</fullName>
        <shortName evidence="1">PSII-J</shortName>
    </recommendedName>
</protein>
<name>PSBJ_NANDO</name>
<evidence type="ECO:0000255" key="1">
    <source>
        <dbReference type="HAMAP-Rule" id="MF_01305"/>
    </source>
</evidence>
<comment type="function">
    <text evidence="1">One of the components of the core complex of photosystem II (PSII). PSII is a light-driven water:plastoquinone oxidoreductase that uses light energy to abstract electrons from H(2)O, generating O(2) and a proton gradient subsequently used for ATP formation. It consists of a core antenna complex that captures photons, and an electron transfer chain that converts photonic excitation into a charge separation.</text>
</comment>
<comment type="subunit">
    <text evidence="1">PSII is composed of 1 copy each of membrane proteins PsbA, PsbB, PsbC, PsbD, PsbE, PsbF, PsbH, PsbI, PsbJ, PsbK, PsbL, PsbM, PsbT, PsbX, PsbY, PsbZ, Psb30/Ycf12, at least 3 peripheral proteins of the oxygen-evolving complex and a large number of cofactors. It forms dimeric complexes.</text>
</comment>
<comment type="subcellular location">
    <subcellularLocation>
        <location evidence="1">Plastid</location>
        <location evidence="1">Chloroplast thylakoid membrane</location>
        <topology evidence="1">Single-pass membrane protein</topology>
    </subcellularLocation>
</comment>
<comment type="similarity">
    <text evidence="1">Belongs to the PsbJ family.</text>
</comment>
<proteinExistence type="inferred from homology"/>
<accession>Q09FU7</accession>
<keyword id="KW-0150">Chloroplast</keyword>
<keyword id="KW-0472">Membrane</keyword>
<keyword id="KW-0602">Photosynthesis</keyword>
<keyword id="KW-0604">Photosystem II</keyword>
<keyword id="KW-0934">Plastid</keyword>
<keyword id="KW-0674">Reaction center</keyword>
<keyword id="KW-0793">Thylakoid</keyword>
<keyword id="KW-0812">Transmembrane</keyword>
<keyword id="KW-1133">Transmembrane helix</keyword>
<sequence length="40" mass="4131">MADTTGRIPLWLIGTVAGILIIGLLGVFFYGSYSGLGSSL</sequence>
<organism>
    <name type="scientific">Nandina domestica</name>
    <name type="common">Heavenly bamboo</name>
    <dbReference type="NCBI Taxonomy" id="41776"/>
    <lineage>
        <taxon>Eukaryota</taxon>
        <taxon>Viridiplantae</taxon>
        <taxon>Streptophyta</taxon>
        <taxon>Embryophyta</taxon>
        <taxon>Tracheophyta</taxon>
        <taxon>Spermatophyta</taxon>
        <taxon>Magnoliopsida</taxon>
        <taxon>Ranunculales</taxon>
        <taxon>Berberidaceae</taxon>
        <taxon>Nandinoideae</taxon>
        <taxon>Nandineae</taxon>
        <taxon>Nandina</taxon>
    </lineage>
</organism>
<reference key="1">
    <citation type="journal article" date="2006" name="BMC Plant Biol.">
        <title>Rapid and accurate pyrosequencing of angiosperm plastid genomes.</title>
        <authorList>
            <person name="Moore M.J."/>
            <person name="Dhingra A."/>
            <person name="Soltis P.S."/>
            <person name="Shaw R."/>
            <person name="Farmerie W.G."/>
            <person name="Folta K.M."/>
            <person name="Soltis D.E."/>
        </authorList>
    </citation>
    <scope>NUCLEOTIDE SEQUENCE [LARGE SCALE GENOMIC DNA]</scope>
</reference>
<geneLocation type="chloroplast"/>
<feature type="chain" id="PRO_0000292255" description="Photosystem II reaction center protein J">
    <location>
        <begin position="1"/>
        <end position="40"/>
    </location>
</feature>
<feature type="transmembrane region" description="Helical" evidence="1">
    <location>
        <begin position="8"/>
        <end position="28"/>
    </location>
</feature>